<organism>
    <name type="scientific">Klebsiella pneumoniae</name>
    <dbReference type="NCBI Taxonomy" id="573"/>
    <lineage>
        <taxon>Bacteria</taxon>
        <taxon>Pseudomonadati</taxon>
        <taxon>Pseudomonadota</taxon>
        <taxon>Gammaproteobacteria</taxon>
        <taxon>Enterobacterales</taxon>
        <taxon>Enterobacteriaceae</taxon>
        <taxon>Klebsiella/Raoultella group</taxon>
        <taxon>Klebsiella</taxon>
        <taxon>Klebsiella pneumoniae complex</taxon>
    </lineage>
</organism>
<protein>
    <recommendedName>
        <fullName>2-(5''-triphosphoribosyl)-3'-dephosphocoenzyme-A synthase</fullName>
        <shortName>2-(5''-triphosphoribosyl)-3'-dephospho-CoA synthase</shortName>
        <ecNumber>2.4.2.52</ecNumber>
    </recommendedName>
</protein>
<gene>
    <name type="primary">mdcB</name>
</gene>
<feature type="chain" id="PRO_0000214671" description="2-(5''-triphosphoribosyl)-3'-dephosphocoenzyme-A synthase">
    <location>
        <begin position="1"/>
        <end position="280"/>
    </location>
</feature>
<dbReference type="EC" id="2.4.2.52"/>
<dbReference type="EMBL" id="U95087">
    <property type="protein sequence ID" value="AAC45454.1"/>
    <property type="molecule type" value="Genomic_DNA"/>
</dbReference>
<dbReference type="EMBL" id="U56096">
    <property type="protein sequence ID" value="AAA99817.1"/>
    <property type="status" value="ALT_FRAME"/>
    <property type="molecule type" value="Genomic_DNA"/>
</dbReference>
<dbReference type="RefSeq" id="WP_004143107.1">
    <property type="nucleotide sequence ID" value="NZ_WYAM01000003.1"/>
</dbReference>
<dbReference type="BioCyc" id="MetaCyc:MONOMER-14203"/>
<dbReference type="BRENDA" id="2.4.2.52">
    <property type="organism ID" value="2814"/>
</dbReference>
<dbReference type="GO" id="GO:0005524">
    <property type="term" value="F:ATP binding"/>
    <property type="evidence" value="ECO:0007669"/>
    <property type="project" value="UniProtKB-KW"/>
</dbReference>
<dbReference type="GO" id="GO:0046917">
    <property type="term" value="F:triphosphoribosyl-dephospho-CoA synthase activity"/>
    <property type="evidence" value="ECO:0007669"/>
    <property type="project" value="UniProtKB-UniRule"/>
</dbReference>
<dbReference type="GO" id="GO:0051191">
    <property type="term" value="P:prosthetic group biosynthetic process"/>
    <property type="evidence" value="ECO:0007669"/>
    <property type="project" value="TreeGrafter"/>
</dbReference>
<dbReference type="Gene3D" id="1.10.4200.10">
    <property type="entry name" value="Triphosphoribosyl-dephospho-CoA protein"/>
    <property type="match status" value="2"/>
</dbReference>
<dbReference type="HAMAP" id="MF_01883">
    <property type="entry name" value="MdcB"/>
    <property type="match status" value="1"/>
</dbReference>
<dbReference type="InterPro" id="IPR002736">
    <property type="entry name" value="CitG"/>
</dbReference>
<dbReference type="InterPro" id="IPR017555">
    <property type="entry name" value="TriPribosyl-deP-CoA_syn"/>
</dbReference>
<dbReference type="NCBIfam" id="TIGR03132">
    <property type="entry name" value="malonate_mdcB"/>
    <property type="match status" value="1"/>
</dbReference>
<dbReference type="NCBIfam" id="NF002315">
    <property type="entry name" value="PRK01237.1"/>
    <property type="match status" value="1"/>
</dbReference>
<dbReference type="PANTHER" id="PTHR30201:SF2">
    <property type="entry name" value="2-(5''-TRIPHOSPHORIBOSYL)-3'-DEPHOSPHOCOENZYME-A SYNTHASE"/>
    <property type="match status" value="1"/>
</dbReference>
<dbReference type="PANTHER" id="PTHR30201">
    <property type="entry name" value="TRIPHOSPHORIBOSYL-DEPHOSPHO-COA SYNTHASE"/>
    <property type="match status" value="1"/>
</dbReference>
<dbReference type="Pfam" id="PF01874">
    <property type="entry name" value="CitG"/>
    <property type="match status" value="1"/>
</dbReference>
<keyword id="KW-0067">ATP-binding</keyword>
<keyword id="KW-0547">Nucleotide-binding</keyword>
<keyword id="KW-0808">Transferase</keyword>
<proteinExistence type="inferred from homology"/>
<sequence length="280" mass="29213">MKNLSPLHAESRVSWLAHTASACLIDEARLSPKPGLVDSRGNGAHQDLNLALMERSARSLQPTFHALAEQSWRRPADIALRETVGRLGREGEAQMMLATGGVNTHRGAIWALGLLVSAVAMLGGEGQSQAIADAAAALARLPDGFAPKSFSKGLRASRRWQVPGAREEAQCGFPHITRLALPQLQHSRARGASEPQAQLDALMAIMTSLSDTCVLSRAGMAGLQAMQQGACEVLAAGGCASFAGRAALARLDAIMLALNASPGGAADLLAATLFLDRVAG</sequence>
<accession>P71422</accession>
<comment type="function">
    <text evidence="1">Involved in the formation of 2-(5''-phosphoribosyl)-3'-dephosphocoenzyme-A, the prosthetic group of the acyl-carrier protein of the malonate decarboxylase.</text>
</comment>
<comment type="catalytic activity">
    <reaction>
        <text>3'-dephospho-CoA + ATP = 2'-(5''-triphospho-alpha-D-ribosyl)-3'-dephospho-CoA + adenine</text>
        <dbReference type="Rhea" id="RHEA:15117"/>
        <dbReference type="ChEBI" id="CHEBI:16708"/>
        <dbReference type="ChEBI" id="CHEBI:30616"/>
        <dbReference type="ChEBI" id="CHEBI:57328"/>
        <dbReference type="ChEBI" id="CHEBI:61378"/>
        <dbReference type="EC" id="2.4.2.52"/>
    </reaction>
</comment>
<comment type="similarity">
    <text evidence="2">Belongs to the CitG/MdcB family.</text>
</comment>
<comment type="sequence caution" evidence="2">
    <conflict type="frameshift">
        <sequence resource="EMBL-CDS" id="AAA99817"/>
    </conflict>
</comment>
<reference key="1">
    <citation type="journal article" date="1997" name="Eur. J. Biochem.">
        <title>Sequence of a gene cluster from Klebsiella pneumoniae encoding malonate decarboxylase and expression of the enzyme in Escherichia coli.</title>
        <authorList>
            <person name="Hoenke S."/>
            <person name="Schmid M."/>
            <person name="Dimroth P."/>
        </authorList>
    </citation>
    <scope>NUCLEOTIDE SEQUENCE [GENOMIC DNA]</scope>
</reference>
<reference key="2">
    <citation type="submission" date="1996-04" db="EMBL/GenBank/DDBJ databases">
        <title>Molecular characterization of the malonate utilization system in Klebsiella pneumoniae.</title>
        <authorList>
            <person name="Chang H."/>
            <person name="Deng W."/>
            <person name="Chaou S."/>
            <person name="Lee R."/>
            <person name="Peng H."/>
        </authorList>
    </citation>
    <scope>NUCLEOTIDE SEQUENCE [GENOMIC DNA]</scope>
    <source>
        <strain>CG43</strain>
    </source>
</reference>
<reference key="3">
    <citation type="journal article" date="2000" name="Biochemistry">
        <title>Biosynthesis of triphosphoribosyl-dephospho-coenzyme A, the precursor of the prosthetic group of malonate decarboxylase.</title>
        <authorList>
            <person name="Hoenke S."/>
            <person name="Wild M.R."/>
            <person name="Dimroth P."/>
        </authorList>
    </citation>
    <scope>FUNCTION</scope>
</reference>
<name>MDCB_KLEPN</name>
<evidence type="ECO:0000269" key="1">
    <source>
    </source>
</evidence>
<evidence type="ECO:0000305" key="2"/>